<feature type="chain" id="PRO_1000096585" description="Uracil-DNA glycosylase">
    <location>
        <begin position="1"/>
        <end position="233"/>
    </location>
</feature>
<feature type="active site" description="Proton acceptor" evidence="1">
    <location>
        <position position="70"/>
    </location>
</feature>
<organism>
    <name type="scientific">Helicobacter pylori (strain G27)</name>
    <dbReference type="NCBI Taxonomy" id="563041"/>
    <lineage>
        <taxon>Bacteria</taxon>
        <taxon>Pseudomonadati</taxon>
        <taxon>Campylobacterota</taxon>
        <taxon>Epsilonproteobacteria</taxon>
        <taxon>Campylobacterales</taxon>
        <taxon>Helicobacteraceae</taxon>
        <taxon>Helicobacter</taxon>
    </lineage>
</organism>
<evidence type="ECO:0000255" key="1">
    <source>
        <dbReference type="HAMAP-Rule" id="MF_00148"/>
    </source>
</evidence>
<protein>
    <recommendedName>
        <fullName evidence="1">Uracil-DNA glycosylase</fullName>
        <shortName evidence="1">UDG</shortName>
        <ecNumber evidence="1">3.2.2.27</ecNumber>
    </recommendedName>
</protein>
<proteinExistence type="inferred from homology"/>
<reference key="1">
    <citation type="journal article" date="2009" name="J. Bacteriol.">
        <title>The complete genome sequence of Helicobacter pylori strain G27.</title>
        <authorList>
            <person name="Baltrus D.A."/>
            <person name="Amieva M.R."/>
            <person name="Covacci A."/>
            <person name="Lowe T.M."/>
            <person name="Merrell D.S."/>
            <person name="Ottemann K.M."/>
            <person name="Stein M."/>
            <person name="Salama N.R."/>
            <person name="Guillemin K."/>
        </authorList>
    </citation>
    <scope>NUCLEOTIDE SEQUENCE [LARGE SCALE GENOMIC DNA]</scope>
    <source>
        <strain>G27</strain>
    </source>
</reference>
<sequence length="233" mass="26254">MKLFDYAPLSLAWREFLQSEFKKPYFLEIEKRYLEALKSPKTIFPKSSNLFYALNLTPPSAVKIILLGQDPYHSTYLENEQELPVAMGLSFSVEKNAPIPPSLKNIFKELHANLGVPVPCCGDLSAWAKRGMLLLNAILSVEKNQAASHQYIGWEAFSDQILMRLFKTTAPLIVVLLGKVAQKKIALIPKNKHIIITAPHPSPLSRGFLGSGVFSSVQKAYREVYRKDFDFSL</sequence>
<gene>
    <name evidence="1" type="primary">ung</name>
    <name type="ordered locus">HPG27_1295</name>
</gene>
<dbReference type="EC" id="3.2.2.27" evidence="1"/>
<dbReference type="EMBL" id="CP001173">
    <property type="protein sequence ID" value="ACI28043.1"/>
    <property type="molecule type" value="Genomic_DNA"/>
</dbReference>
<dbReference type="RefSeq" id="WP_000764889.1">
    <property type="nucleotide sequence ID" value="NC_011333.1"/>
</dbReference>
<dbReference type="SMR" id="B5Z8Z4"/>
<dbReference type="KEGG" id="hpg:HPG27_1295"/>
<dbReference type="HOGENOM" id="CLU_032162_3_2_7"/>
<dbReference type="Proteomes" id="UP000001735">
    <property type="component" value="Chromosome"/>
</dbReference>
<dbReference type="GO" id="GO:0005737">
    <property type="term" value="C:cytoplasm"/>
    <property type="evidence" value="ECO:0007669"/>
    <property type="project" value="UniProtKB-SubCell"/>
</dbReference>
<dbReference type="GO" id="GO:0004844">
    <property type="term" value="F:uracil DNA N-glycosylase activity"/>
    <property type="evidence" value="ECO:0007669"/>
    <property type="project" value="UniProtKB-UniRule"/>
</dbReference>
<dbReference type="GO" id="GO:0097510">
    <property type="term" value="P:base-excision repair, AP site formation via deaminated base removal"/>
    <property type="evidence" value="ECO:0007669"/>
    <property type="project" value="TreeGrafter"/>
</dbReference>
<dbReference type="CDD" id="cd10027">
    <property type="entry name" value="UDG-F1-like"/>
    <property type="match status" value="1"/>
</dbReference>
<dbReference type="FunFam" id="3.40.470.10:FF:000016">
    <property type="entry name" value="Uracil-DNA glycosylase"/>
    <property type="match status" value="1"/>
</dbReference>
<dbReference type="Gene3D" id="3.40.470.10">
    <property type="entry name" value="Uracil-DNA glycosylase-like domain"/>
    <property type="match status" value="1"/>
</dbReference>
<dbReference type="HAMAP" id="MF_00148">
    <property type="entry name" value="UDG"/>
    <property type="match status" value="1"/>
</dbReference>
<dbReference type="InterPro" id="IPR002043">
    <property type="entry name" value="UDG_fam1"/>
</dbReference>
<dbReference type="InterPro" id="IPR018085">
    <property type="entry name" value="Ura-DNA_Glyclase_AS"/>
</dbReference>
<dbReference type="InterPro" id="IPR005122">
    <property type="entry name" value="Uracil-DNA_glycosylase-like"/>
</dbReference>
<dbReference type="InterPro" id="IPR036895">
    <property type="entry name" value="Uracil-DNA_glycosylase-like_sf"/>
</dbReference>
<dbReference type="NCBIfam" id="NF003588">
    <property type="entry name" value="PRK05254.1-1"/>
    <property type="match status" value="1"/>
</dbReference>
<dbReference type="NCBIfam" id="NF003589">
    <property type="entry name" value="PRK05254.1-2"/>
    <property type="match status" value="1"/>
</dbReference>
<dbReference type="NCBIfam" id="NF003592">
    <property type="entry name" value="PRK05254.1-5"/>
    <property type="match status" value="1"/>
</dbReference>
<dbReference type="NCBIfam" id="TIGR00628">
    <property type="entry name" value="ung"/>
    <property type="match status" value="1"/>
</dbReference>
<dbReference type="PANTHER" id="PTHR11264">
    <property type="entry name" value="URACIL-DNA GLYCOSYLASE"/>
    <property type="match status" value="1"/>
</dbReference>
<dbReference type="PANTHER" id="PTHR11264:SF0">
    <property type="entry name" value="URACIL-DNA GLYCOSYLASE"/>
    <property type="match status" value="1"/>
</dbReference>
<dbReference type="Pfam" id="PF03167">
    <property type="entry name" value="UDG"/>
    <property type="match status" value="1"/>
</dbReference>
<dbReference type="SMART" id="SM00986">
    <property type="entry name" value="UDG"/>
    <property type="match status" value="1"/>
</dbReference>
<dbReference type="SMART" id="SM00987">
    <property type="entry name" value="UreE_C"/>
    <property type="match status" value="1"/>
</dbReference>
<dbReference type="SUPFAM" id="SSF52141">
    <property type="entry name" value="Uracil-DNA glycosylase-like"/>
    <property type="match status" value="1"/>
</dbReference>
<dbReference type="PROSITE" id="PS00130">
    <property type="entry name" value="U_DNA_GLYCOSYLASE"/>
    <property type="match status" value="1"/>
</dbReference>
<keyword id="KW-0963">Cytoplasm</keyword>
<keyword id="KW-0227">DNA damage</keyword>
<keyword id="KW-0234">DNA repair</keyword>
<keyword id="KW-0378">Hydrolase</keyword>
<keyword id="KW-1185">Reference proteome</keyword>
<name>UNG_HELPG</name>
<accession>B5Z8Z4</accession>
<comment type="function">
    <text evidence="1">Excises uracil residues from the DNA which can arise as a result of misincorporation of dUMP residues by DNA polymerase or due to deamination of cytosine.</text>
</comment>
<comment type="catalytic activity">
    <reaction evidence="1">
        <text>Hydrolyzes single-stranded DNA or mismatched double-stranded DNA and polynucleotides, releasing free uracil.</text>
        <dbReference type="EC" id="3.2.2.27"/>
    </reaction>
</comment>
<comment type="subcellular location">
    <subcellularLocation>
        <location evidence="1">Cytoplasm</location>
    </subcellularLocation>
</comment>
<comment type="similarity">
    <text evidence="1">Belongs to the uracil-DNA glycosylase (UDG) superfamily. UNG family.</text>
</comment>